<proteinExistence type="inferred from homology"/>
<sequence>MGKYNRILALDLGIKTCGFAISDQNWKISYPLEQFNFNRYDFASVISRIAFWMKEYPISILVLGYPLTLAGKISPRTKMVEYFADLVKKNYEIKVVFQDERLTTKQAQTFLLDLGISFKKRQKVIDKLAAQIILERFLNTKKG</sequence>
<dbReference type="EC" id="3.1.-.-" evidence="1"/>
<dbReference type="EMBL" id="AE017332">
    <property type="protein sequence ID" value="AAV27760.1"/>
    <property type="molecule type" value="Genomic_DNA"/>
</dbReference>
<dbReference type="RefSeq" id="WP_011206016.1">
    <property type="nucleotide sequence ID" value="NC_006360.1"/>
</dbReference>
<dbReference type="SMR" id="Q601M3"/>
<dbReference type="GeneID" id="41334500"/>
<dbReference type="KEGG" id="mhy:mhp179"/>
<dbReference type="eggNOG" id="COG0816">
    <property type="taxonomic scope" value="Bacteria"/>
</dbReference>
<dbReference type="HOGENOM" id="CLU_098240_2_2_14"/>
<dbReference type="PhylomeDB" id="Q601M3"/>
<dbReference type="Proteomes" id="UP000006822">
    <property type="component" value="Chromosome"/>
</dbReference>
<dbReference type="GO" id="GO:0005829">
    <property type="term" value="C:cytosol"/>
    <property type="evidence" value="ECO:0007669"/>
    <property type="project" value="TreeGrafter"/>
</dbReference>
<dbReference type="GO" id="GO:0004518">
    <property type="term" value="F:nuclease activity"/>
    <property type="evidence" value="ECO:0007669"/>
    <property type="project" value="UniProtKB-KW"/>
</dbReference>
<dbReference type="GO" id="GO:0000967">
    <property type="term" value="P:rRNA 5'-end processing"/>
    <property type="evidence" value="ECO:0007669"/>
    <property type="project" value="UniProtKB-UniRule"/>
</dbReference>
<dbReference type="CDD" id="cd16964">
    <property type="entry name" value="YqgF"/>
    <property type="match status" value="1"/>
</dbReference>
<dbReference type="Gene3D" id="3.30.420.140">
    <property type="entry name" value="YqgF/RNase H-like domain"/>
    <property type="match status" value="1"/>
</dbReference>
<dbReference type="HAMAP" id="MF_00651">
    <property type="entry name" value="Nuclease_YqgF"/>
    <property type="match status" value="1"/>
</dbReference>
<dbReference type="InterPro" id="IPR012337">
    <property type="entry name" value="RNaseH-like_sf"/>
</dbReference>
<dbReference type="InterPro" id="IPR005227">
    <property type="entry name" value="YqgF"/>
</dbReference>
<dbReference type="InterPro" id="IPR006641">
    <property type="entry name" value="YqgF/RNaseH-like_dom"/>
</dbReference>
<dbReference type="InterPro" id="IPR037027">
    <property type="entry name" value="YqgF/RNaseH-like_dom_sf"/>
</dbReference>
<dbReference type="NCBIfam" id="TIGR00250">
    <property type="entry name" value="RNAse_H_YqgF"/>
    <property type="match status" value="1"/>
</dbReference>
<dbReference type="PANTHER" id="PTHR33317">
    <property type="entry name" value="POLYNUCLEOTIDYL TRANSFERASE, RIBONUCLEASE H-LIKE SUPERFAMILY PROTEIN"/>
    <property type="match status" value="1"/>
</dbReference>
<dbReference type="PANTHER" id="PTHR33317:SF4">
    <property type="entry name" value="POLYNUCLEOTIDYL TRANSFERASE, RIBONUCLEASE H-LIKE SUPERFAMILY PROTEIN"/>
    <property type="match status" value="1"/>
</dbReference>
<dbReference type="Pfam" id="PF03652">
    <property type="entry name" value="RuvX"/>
    <property type="match status" value="1"/>
</dbReference>
<dbReference type="SMART" id="SM00732">
    <property type="entry name" value="YqgFc"/>
    <property type="match status" value="1"/>
</dbReference>
<dbReference type="SUPFAM" id="SSF53098">
    <property type="entry name" value="Ribonuclease H-like"/>
    <property type="match status" value="1"/>
</dbReference>
<reference key="1">
    <citation type="journal article" date="2004" name="J. Bacteriol.">
        <title>The genome sequence of Mycoplasma hyopneumoniae strain 232, the agent of swine mycoplasmosis.</title>
        <authorList>
            <person name="Minion F.C."/>
            <person name="Lefkowitz E.J."/>
            <person name="Madsen M.L."/>
            <person name="Cleary B.J."/>
            <person name="Swartzell S.M."/>
            <person name="Mahairas G.G."/>
        </authorList>
    </citation>
    <scope>NUCLEOTIDE SEQUENCE [LARGE SCALE GENOMIC DNA]</scope>
    <source>
        <strain>232</strain>
    </source>
</reference>
<keyword id="KW-0963">Cytoplasm</keyword>
<keyword id="KW-0378">Hydrolase</keyword>
<keyword id="KW-0540">Nuclease</keyword>
<keyword id="KW-0690">Ribosome biogenesis</keyword>
<organism>
    <name type="scientific">Mesomycoplasma hyopneumoniae (strain 232)</name>
    <name type="common">Mycoplasma hyopneumoniae</name>
    <dbReference type="NCBI Taxonomy" id="295358"/>
    <lineage>
        <taxon>Bacteria</taxon>
        <taxon>Bacillati</taxon>
        <taxon>Mycoplasmatota</taxon>
        <taxon>Mycoplasmoidales</taxon>
        <taxon>Metamycoplasmataceae</taxon>
        <taxon>Mesomycoplasma</taxon>
    </lineage>
</organism>
<comment type="function">
    <text evidence="1">Could be a nuclease involved in processing of the 5'-end of pre-16S rRNA.</text>
</comment>
<comment type="subcellular location">
    <subcellularLocation>
        <location evidence="1">Cytoplasm</location>
    </subcellularLocation>
</comment>
<comment type="similarity">
    <text evidence="1">Belongs to the YqgF nuclease family.</text>
</comment>
<name>YQGF_MESH2</name>
<evidence type="ECO:0000255" key="1">
    <source>
        <dbReference type="HAMAP-Rule" id="MF_00651"/>
    </source>
</evidence>
<gene>
    <name type="ordered locus">mhp179</name>
</gene>
<protein>
    <recommendedName>
        <fullName evidence="1">Putative pre-16S rRNA nuclease</fullName>
        <ecNumber evidence="1">3.1.-.-</ecNumber>
    </recommendedName>
</protein>
<feature type="chain" id="PRO_0000172092" description="Putative pre-16S rRNA nuclease">
    <location>
        <begin position="1"/>
        <end position="143"/>
    </location>
</feature>
<accession>Q601M3</accession>